<dbReference type="EMBL" id="CP000243">
    <property type="protein sequence ID" value="ABE07932.1"/>
    <property type="molecule type" value="Genomic_DNA"/>
</dbReference>
<dbReference type="RefSeq" id="WP_000050789.1">
    <property type="nucleotide sequence ID" value="NZ_CP064825.1"/>
</dbReference>
<dbReference type="SMR" id="Q1R9N2"/>
<dbReference type="GeneID" id="75206440"/>
<dbReference type="KEGG" id="eci:UTI89_C2464"/>
<dbReference type="HOGENOM" id="CLU_063050_0_1_6"/>
<dbReference type="Proteomes" id="UP000001952">
    <property type="component" value="Chromosome"/>
</dbReference>
<dbReference type="GO" id="GO:0043590">
    <property type="term" value="C:bacterial nucleoid"/>
    <property type="evidence" value="ECO:0007669"/>
    <property type="project" value="TreeGrafter"/>
</dbReference>
<dbReference type="GO" id="GO:0005737">
    <property type="term" value="C:cytoplasm"/>
    <property type="evidence" value="ECO:0007669"/>
    <property type="project" value="UniProtKB-UniRule"/>
</dbReference>
<dbReference type="GO" id="GO:0003690">
    <property type="term" value="F:double-stranded DNA binding"/>
    <property type="evidence" value="ECO:0007669"/>
    <property type="project" value="TreeGrafter"/>
</dbReference>
<dbReference type="GO" id="GO:0003727">
    <property type="term" value="F:single-stranded RNA binding"/>
    <property type="evidence" value="ECO:0007669"/>
    <property type="project" value="TreeGrafter"/>
</dbReference>
<dbReference type="HAMAP" id="MF_00730">
    <property type="entry name" value="NdpA"/>
    <property type="match status" value="1"/>
</dbReference>
<dbReference type="InterPro" id="IPR007358">
    <property type="entry name" value="Nucleoid_associated_NdpA"/>
</dbReference>
<dbReference type="NCBIfam" id="NF001557">
    <property type="entry name" value="PRK00378.1"/>
    <property type="match status" value="1"/>
</dbReference>
<dbReference type="PANTHER" id="PTHR38772">
    <property type="match status" value="1"/>
</dbReference>
<dbReference type="PANTHER" id="PTHR38772:SF1">
    <property type="entry name" value="NUCLEOID-ASSOCIATED PROTEIN YEJK"/>
    <property type="match status" value="1"/>
</dbReference>
<dbReference type="Pfam" id="PF04245">
    <property type="entry name" value="NA37"/>
    <property type="match status" value="1"/>
</dbReference>
<comment type="subcellular location">
    <subcellularLocation>
        <location evidence="1">Cytoplasm</location>
        <location evidence="1">Nucleoid</location>
    </subcellularLocation>
</comment>
<comment type="similarity">
    <text evidence="1">Belongs to the YejK family.</text>
</comment>
<name>NDPA_ECOUT</name>
<accession>Q1R9N2</accession>
<evidence type="ECO:0000255" key="1">
    <source>
        <dbReference type="HAMAP-Rule" id="MF_00730"/>
    </source>
</evidence>
<gene>
    <name evidence="1" type="primary">yejK</name>
    <name type="ordered locus">UTI89_C2464</name>
</gene>
<keyword id="KW-0963">Cytoplasm</keyword>
<organism>
    <name type="scientific">Escherichia coli (strain UTI89 / UPEC)</name>
    <dbReference type="NCBI Taxonomy" id="364106"/>
    <lineage>
        <taxon>Bacteria</taxon>
        <taxon>Pseudomonadati</taxon>
        <taxon>Pseudomonadota</taxon>
        <taxon>Gammaproteobacteria</taxon>
        <taxon>Enterobacterales</taxon>
        <taxon>Enterobacteriaceae</taxon>
        <taxon>Escherichia</taxon>
    </lineage>
</organism>
<reference key="1">
    <citation type="journal article" date="2006" name="Proc. Natl. Acad. Sci. U.S.A.">
        <title>Identification of genes subject to positive selection in uropathogenic strains of Escherichia coli: a comparative genomics approach.</title>
        <authorList>
            <person name="Chen S.L."/>
            <person name="Hung C.-S."/>
            <person name="Xu J."/>
            <person name="Reigstad C.S."/>
            <person name="Magrini V."/>
            <person name="Sabo A."/>
            <person name="Blasiar D."/>
            <person name="Bieri T."/>
            <person name="Meyer R.R."/>
            <person name="Ozersky P."/>
            <person name="Armstrong J.R."/>
            <person name="Fulton R.S."/>
            <person name="Latreille J.P."/>
            <person name="Spieth J."/>
            <person name="Hooton T.M."/>
            <person name="Mardis E.R."/>
            <person name="Hultgren S.J."/>
            <person name="Gordon J.I."/>
        </authorList>
    </citation>
    <scope>NUCLEOTIDE SEQUENCE [LARGE SCALE GENOMIC DNA]</scope>
    <source>
        <strain>UTI89 / UPEC</strain>
    </source>
</reference>
<sequence>MSLDINQIALHQLIKRDEQNLELVLRDSLLEPTETVVEMVAELHRVYSAKNKAYGLFSEESELAQTLRLQRQGEEDFLAFSRAATGRLRDELAKYPFADGGFVLFCHYRYLAVEYLLVAVLSNLSSMRVNENLDINPTHYLDINHADIVARIDLTEWETNPESTRYLTFLKGRVGRKVADFFMDFLGASEGLNAKAQNRGLLQAVDDFTAEAQLDKAERQNVRQQVYSYCNEQLQAGEEIELESLSKELAGVSEVSFTEFAAEKGYELEESFPADRSTLRQLTKFAGSGGGLTINFDAMLLGERIFWDPATDTLTIKGTPPNLRDQLQRRTSGGN</sequence>
<protein>
    <recommendedName>
        <fullName evidence="1">Nucleoid-associated protein YejK</fullName>
    </recommendedName>
</protein>
<proteinExistence type="inferred from homology"/>
<feature type="chain" id="PRO_1000045924" description="Nucleoid-associated protein YejK">
    <location>
        <begin position="1"/>
        <end position="335"/>
    </location>
</feature>